<feature type="chain" id="PRO_1000131680" description="Chaperone protein HscA">
    <location>
        <begin position="1"/>
        <end position="616"/>
    </location>
</feature>
<sequence length="616" mass="65607">MALLQISEPGLSAAPHQRRLAAGIDLGTTNSLVATVRSGQAETLADHEGRHLLPSVVHYQQQGHSVGYDARANAALDTANTISSVKRLMGRSLADIQQRYPHLPYQFQASENGLPMIETAAGLLNPVRVSADILKALAARATEALAGDLDGVVITVPAYFDDAQRQGTKDAARLAGLHVLRLLNEPTAAAIAYGLDSGQEGVIAVYDLGGGTFDISILRLSRGVFEVLATGGDSALGGDDFDHLLADYIREQAGIPDRSDNRVQRELLDAAIAAKIALSDADSVTVNVAGWQGEISREQFNELIAPLVKRTLLACRRALKDAGVEADEVLEVVMVGGSTRVPLVRERVGEFFGRPPLTSINPDKVVAIGAAIQADILVGNKPDSEMLLLDVIPLSLGLETMGGLVEKVIPRNTTIPVARAQDFTTFKDGQTAMSIHVMQGERELVQDCRSLARFALRGIPALPAGGAHIRVTFQVDADGLLSVTAMEKSTGVEASIQVKPSYGLTDSEIASMIKDSMSYAEQDVKARMLAEQKVEAARVLESLHGALAADAALLSAAERQVIDDAAAHLSEVAQGDDVDAIEQAIKNVDKQTQDFAARRMDQSVRRALKGHSVDEV</sequence>
<reference key="1">
    <citation type="journal article" date="2009" name="PLoS Genet.">
        <title>Organised genome dynamics in the Escherichia coli species results in highly diverse adaptive paths.</title>
        <authorList>
            <person name="Touchon M."/>
            <person name="Hoede C."/>
            <person name="Tenaillon O."/>
            <person name="Barbe V."/>
            <person name="Baeriswyl S."/>
            <person name="Bidet P."/>
            <person name="Bingen E."/>
            <person name="Bonacorsi S."/>
            <person name="Bouchier C."/>
            <person name="Bouvet O."/>
            <person name="Calteau A."/>
            <person name="Chiapello H."/>
            <person name="Clermont O."/>
            <person name="Cruveiller S."/>
            <person name="Danchin A."/>
            <person name="Diard M."/>
            <person name="Dossat C."/>
            <person name="Karoui M.E."/>
            <person name="Frapy E."/>
            <person name="Garry L."/>
            <person name="Ghigo J.M."/>
            <person name="Gilles A.M."/>
            <person name="Johnson J."/>
            <person name="Le Bouguenec C."/>
            <person name="Lescat M."/>
            <person name="Mangenot S."/>
            <person name="Martinez-Jehanne V."/>
            <person name="Matic I."/>
            <person name="Nassif X."/>
            <person name="Oztas S."/>
            <person name="Petit M.A."/>
            <person name="Pichon C."/>
            <person name="Rouy Z."/>
            <person name="Ruf C.S."/>
            <person name="Schneider D."/>
            <person name="Tourret J."/>
            <person name="Vacherie B."/>
            <person name="Vallenet D."/>
            <person name="Medigue C."/>
            <person name="Rocha E.P.C."/>
            <person name="Denamur E."/>
        </authorList>
    </citation>
    <scope>NUCLEOTIDE SEQUENCE [LARGE SCALE GENOMIC DNA]</scope>
    <source>
        <strain>ATCC 35469 / DSM 13698 / BCRC 15582 / CCUG 18766 / IAM 14443 / JCM 21226 / LMG 7866 / NBRC 102419 / NCTC 12128 / CDC 0568-73</strain>
    </source>
</reference>
<protein>
    <recommendedName>
        <fullName evidence="1">Chaperone protein HscA</fullName>
    </recommendedName>
    <alternativeName>
        <fullName evidence="1">Hsc66</fullName>
    </alternativeName>
</protein>
<dbReference type="EMBL" id="CU928158">
    <property type="protein sequence ID" value="CAQ88190.1"/>
    <property type="molecule type" value="Genomic_DNA"/>
</dbReference>
<dbReference type="RefSeq" id="WP_001196583.1">
    <property type="nucleotide sequence ID" value="NC_011740.1"/>
</dbReference>
<dbReference type="SMR" id="B7LKB3"/>
<dbReference type="GeneID" id="75058294"/>
<dbReference type="KEGG" id="efe:EFER_0646"/>
<dbReference type="HOGENOM" id="CLU_005965_2_1_6"/>
<dbReference type="OrthoDB" id="9766019at2"/>
<dbReference type="Proteomes" id="UP000000745">
    <property type="component" value="Chromosome"/>
</dbReference>
<dbReference type="GO" id="GO:0005524">
    <property type="term" value="F:ATP binding"/>
    <property type="evidence" value="ECO:0007669"/>
    <property type="project" value="UniProtKB-KW"/>
</dbReference>
<dbReference type="GO" id="GO:0016887">
    <property type="term" value="F:ATP hydrolysis activity"/>
    <property type="evidence" value="ECO:0007669"/>
    <property type="project" value="UniProtKB-UniRule"/>
</dbReference>
<dbReference type="GO" id="GO:0140662">
    <property type="term" value="F:ATP-dependent protein folding chaperone"/>
    <property type="evidence" value="ECO:0007669"/>
    <property type="project" value="InterPro"/>
</dbReference>
<dbReference type="GO" id="GO:0051082">
    <property type="term" value="F:unfolded protein binding"/>
    <property type="evidence" value="ECO:0007669"/>
    <property type="project" value="InterPro"/>
</dbReference>
<dbReference type="GO" id="GO:0016226">
    <property type="term" value="P:iron-sulfur cluster assembly"/>
    <property type="evidence" value="ECO:0007669"/>
    <property type="project" value="InterPro"/>
</dbReference>
<dbReference type="CDD" id="cd10236">
    <property type="entry name" value="ASKHA_NBD_HSP70_HscA"/>
    <property type="match status" value="1"/>
</dbReference>
<dbReference type="FunFam" id="1.20.1270.10:FF:000006">
    <property type="entry name" value="Chaperone protein HscA"/>
    <property type="match status" value="1"/>
</dbReference>
<dbReference type="FunFam" id="3.30.420.40:FF:000046">
    <property type="entry name" value="Chaperone protein HscA"/>
    <property type="match status" value="1"/>
</dbReference>
<dbReference type="FunFam" id="3.90.640.10:FF:000013">
    <property type="entry name" value="Chaperone protein HscA"/>
    <property type="match status" value="1"/>
</dbReference>
<dbReference type="FunFam" id="2.60.34.10:FF:000005">
    <property type="entry name" value="Chaperone protein HscA homolog"/>
    <property type="match status" value="1"/>
</dbReference>
<dbReference type="FunFam" id="3.30.420.40:FF:000020">
    <property type="entry name" value="Chaperone protein HscA homolog"/>
    <property type="match status" value="1"/>
</dbReference>
<dbReference type="Gene3D" id="1.20.1270.10">
    <property type="match status" value="1"/>
</dbReference>
<dbReference type="Gene3D" id="3.30.420.40">
    <property type="match status" value="2"/>
</dbReference>
<dbReference type="Gene3D" id="3.90.640.10">
    <property type="entry name" value="Actin, Chain A, domain 4"/>
    <property type="match status" value="1"/>
</dbReference>
<dbReference type="Gene3D" id="2.60.34.10">
    <property type="entry name" value="Substrate Binding Domain Of DNAk, Chain A, domain 1"/>
    <property type="match status" value="1"/>
</dbReference>
<dbReference type="HAMAP" id="MF_00679">
    <property type="entry name" value="HscA"/>
    <property type="match status" value="1"/>
</dbReference>
<dbReference type="InterPro" id="IPR043129">
    <property type="entry name" value="ATPase_NBD"/>
</dbReference>
<dbReference type="InterPro" id="IPR018181">
    <property type="entry name" value="Heat_shock_70_CS"/>
</dbReference>
<dbReference type="InterPro" id="IPR042039">
    <property type="entry name" value="HscA_NBD"/>
</dbReference>
<dbReference type="InterPro" id="IPR029048">
    <property type="entry name" value="HSP70_C_sf"/>
</dbReference>
<dbReference type="InterPro" id="IPR029047">
    <property type="entry name" value="HSP70_peptide-bd_sf"/>
</dbReference>
<dbReference type="InterPro" id="IPR013126">
    <property type="entry name" value="Hsp_70_fam"/>
</dbReference>
<dbReference type="InterPro" id="IPR010236">
    <property type="entry name" value="ISC_FeS_clus_asmbl_HscA"/>
</dbReference>
<dbReference type="NCBIfam" id="TIGR01991">
    <property type="entry name" value="HscA"/>
    <property type="match status" value="1"/>
</dbReference>
<dbReference type="NCBIfam" id="NF003520">
    <property type="entry name" value="PRK05183.1"/>
    <property type="match status" value="1"/>
</dbReference>
<dbReference type="PANTHER" id="PTHR19375">
    <property type="entry name" value="HEAT SHOCK PROTEIN 70KDA"/>
    <property type="match status" value="1"/>
</dbReference>
<dbReference type="Pfam" id="PF00012">
    <property type="entry name" value="HSP70"/>
    <property type="match status" value="1"/>
</dbReference>
<dbReference type="PRINTS" id="PR00301">
    <property type="entry name" value="HEATSHOCK70"/>
</dbReference>
<dbReference type="SUPFAM" id="SSF53067">
    <property type="entry name" value="Actin-like ATPase domain"/>
    <property type="match status" value="2"/>
</dbReference>
<dbReference type="SUPFAM" id="SSF100934">
    <property type="entry name" value="Heat shock protein 70kD (HSP70), C-terminal subdomain"/>
    <property type="match status" value="1"/>
</dbReference>
<dbReference type="SUPFAM" id="SSF100920">
    <property type="entry name" value="Heat shock protein 70kD (HSP70), peptide-binding domain"/>
    <property type="match status" value="1"/>
</dbReference>
<dbReference type="PROSITE" id="PS00297">
    <property type="entry name" value="HSP70_1"/>
    <property type="match status" value="1"/>
</dbReference>
<dbReference type="PROSITE" id="PS00329">
    <property type="entry name" value="HSP70_2"/>
    <property type="match status" value="1"/>
</dbReference>
<dbReference type="PROSITE" id="PS01036">
    <property type="entry name" value="HSP70_3"/>
    <property type="match status" value="1"/>
</dbReference>
<keyword id="KW-0067">ATP-binding</keyword>
<keyword id="KW-0143">Chaperone</keyword>
<keyword id="KW-0547">Nucleotide-binding</keyword>
<accession>B7LKB3</accession>
<proteinExistence type="inferred from homology"/>
<name>HSCA_ESCF3</name>
<gene>
    <name evidence="1" type="primary">hscA</name>
    <name type="ordered locus">EFER_0646</name>
</gene>
<comment type="function">
    <text evidence="1">Chaperone involved in the maturation of iron-sulfur cluster-containing proteins. Has a low intrinsic ATPase activity which is markedly stimulated by HscB. Involved in the maturation of IscU.</text>
</comment>
<comment type="similarity">
    <text evidence="1">Belongs to the heat shock protein 70 family.</text>
</comment>
<evidence type="ECO:0000255" key="1">
    <source>
        <dbReference type="HAMAP-Rule" id="MF_00679"/>
    </source>
</evidence>
<organism>
    <name type="scientific">Escherichia fergusonii (strain ATCC 35469 / DSM 13698 / CCUG 18766 / IAM 14443 / JCM 21226 / LMG 7866 / NBRC 102419 / NCTC 12128 / CDC 0568-73)</name>
    <dbReference type="NCBI Taxonomy" id="585054"/>
    <lineage>
        <taxon>Bacteria</taxon>
        <taxon>Pseudomonadati</taxon>
        <taxon>Pseudomonadota</taxon>
        <taxon>Gammaproteobacteria</taxon>
        <taxon>Enterobacterales</taxon>
        <taxon>Enterobacteriaceae</taxon>
        <taxon>Escherichia</taxon>
    </lineage>
</organism>